<proteinExistence type="inferred from homology"/>
<evidence type="ECO:0000255" key="1">
    <source>
        <dbReference type="HAMAP-Rule" id="MF_01322"/>
    </source>
</evidence>
<evidence type="ECO:0000305" key="2"/>
<keyword id="KW-0240">DNA-directed RNA polymerase</keyword>
<keyword id="KW-0460">Magnesium</keyword>
<keyword id="KW-0479">Metal-binding</keyword>
<keyword id="KW-0548">Nucleotidyltransferase</keyword>
<keyword id="KW-0804">Transcription</keyword>
<keyword id="KW-0808">Transferase</keyword>
<keyword id="KW-0862">Zinc</keyword>
<protein>
    <recommendedName>
        <fullName evidence="1">DNA-directed RNA polymerase subunit beta'</fullName>
        <shortName evidence="1">RNAP subunit beta'</shortName>
        <ecNumber evidence="1">2.7.7.6</ecNumber>
    </recommendedName>
    <alternativeName>
        <fullName evidence="1">RNA polymerase subunit beta'</fullName>
    </alternativeName>
    <alternativeName>
        <fullName evidence="1">Transcriptase subunit beta'</fullName>
    </alternativeName>
</protein>
<dbReference type="EC" id="2.7.7.6" evidence="1"/>
<dbReference type="EMBL" id="CP000407">
    <property type="protein sequence ID" value="ABP89092.1"/>
    <property type="status" value="ALT_INIT"/>
    <property type="molecule type" value="Genomic_DNA"/>
</dbReference>
<dbReference type="SMR" id="A4VSK3"/>
<dbReference type="STRING" id="391295.SSU05_0122"/>
<dbReference type="KEGG" id="ssu:SSU05_0122"/>
<dbReference type="eggNOG" id="COG0086">
    <property type="taxonomic scope" value="Bacteria"/>
</dbReference>
<dbReference type="HOGENOM" id="CLU_000524_3_0_9"/>
<dbReference type="GO" id="GO:0000428">
    <property type="term" value="C:DNA-directed RNA polymerase complex"/>
    <property type="evidence" value="ECO:0007669"/>
    <property type="project" value="UniProtKB-KW"/>
</dbReference>
<dbReference type="GO" id="GO:0003677">
    <property type="term" value="F:DNA binding"/>
    <property type="evidence" value="ECO:0007669"/>
    <property type="project" value="UniProtKB-UniRule"/>
</dbReference>
<dbReference type="GO" id="GO:0003899">
    <property type="term" value="F:DNA-directed RNA polymerase activity"/>
    <property type="evidence" value="ECO:0007669"/>
    <property type="project" value="UniProtKB-UniRule"/>
</dbReference>
<dbReference type="GO" id="GO:0000287">
    <property type="term" value="F:magnesium ion binding"/>
    <property type="evidence" value="ECO:0007669"/>
    <property type="project" value="UniProtKB-UniRule"/>
</dbReference>
<dbReference type="GO" id="GO:0008270">
    <property type="term" value="F:zinc ion binding"/>
    <property type="evidence" value="ECO:0007669"/>
    <property type="project" value="UniProtKB-UniRule"/>
</dbReference>
<dbReference type="GO" id="GO:0006351">
    <property type="term" value="P:DNA-templated transcription"/>
    <property type="evidence" value="ECO:0007669"/>
    <property type="project" value="UniProtKB-UniRule"/>
</dbReference>
<dbReference type="CDD" id="cd02655">
    <property type="entry name" value="RNAP_beta'_C"/>
    <property type="match status" value="1"/>
</dbReference>
<dbReference type="CDD" id="cd01609">
    <property type="entry name" value="RNAP_beta'_N"/>
    <property type="match status" value="1"/>
</dbReference>
<dbReference type="FunFam" id="1.10.150.390:FF:000002">
    <property type="entry name" value="DNA-directed RNA polymerase subunit beta"/>
    <property type="match status" value="1"/>
</dbReference>
<dbReference type="FunFam" id="4.10.860.120:FF:000001">
    <property type="entry name" value="DNA-directed RNA polymerase subunit beta"/>
    <property type="match status" value="1"/>
</dbReference>
<dbReference type="Gene3D" id="1.10.132.30">
    <property type="match status" value="1"/>
</dbReference>
<dbReference type="Gene3D" id="1.10.150.390">
    <property type="match status" value="1"/>
</dbReference>
<dbReference type="Gene3D" id="1.10.1790.20">
    <property type="match status" value="1"/>
</dbReference>
<dbReference type="Gene3D" id="1.10.40.90">
    <property type="match status" value="1"/>
</dbReference>
<dbReference type="Gene3D" id="2.40.40.20">
    <property type="match status" value="1"/>
</dbReference>
<dbReference type="Gene3D" id="2.40.50.100">
    <property type="match status" value="1"/>
</dbReference>
<dbReference type="Gene3D" id="4.10.860.120">
    <property type="entry name" value="RNA polymerase II, clamp domain"/>
    <property type="match status" value="1"/>
</dbReference>
<dbReference type="Gene3D" id="1.10.274.100">
    <property type="entry name" value="RNA polymerase Rpb1, domain 3"/>
    <property type="match status" value="1"/>
</dbReference>
<dbReference type="HAMAP" id="MF_01322">
    <property type="entry name" value="RNApol_bact_RpoC"/>
    <property type="match status" value="1"/>
</dbReference>
<dbReference type="InterPro" id="IPR045867">
    <property type="entry name" value="DNA-dir_RpoC_beta_prime"/>
</dbReference>
<dbReference type="InterPro" id="IPR012754">
    <property type="entry name" value="DNA-dir_RpoC_beta_prime_bact"/>
</dbReference>
<dbReference type="InterPro" id="IPR000722">
    <property type="entry name" value="RNA_pol_asu"/>
</dbReference>
<dbReference type="InterPro" id="IPR006592">
    <property type="entry name" value="RNA_pol_N"/>
</dbReference>
<dbReference type="InterPro" id="IPR007080">
    <property type="entry name" value="RNA_pol_Rpb1_1"/>
</dbReference>
<dbReference type="InterPro" id="IPR007066">
    <property type="entry name" value="RNA_pol_Rpb1_3"/>
</dbReference>
<dbReference type="InterPro" id="IPR042102">
    <property type="entry name" value="RNA_pol_Rpb1_3_sf"/>
</dbReference>
<dbReference type="InterPro" id="IPR007083">
    <property type="entry name" value="RNA_pol_Rpb1_4"/>
</dbReference>
<dbReference type="InterPro" id="IPR007081">
    <property type="entry name" value="RNA_pol_Rpb1_5"/>
</dbReference>
<dbReference type="InterPro" id="IPR044893">
    <property type="entry name" value="RNA_pol_Rpb1_clamp_domain"/>
</dbReference>
<dbReference type="InterPro" id="IPR038120">
    <property type="entry name" value="Rpb1_funnel_sf"/>
</dbReference>
<dbReference type="NCBIfam" id="TIGR02386">
    <property type="entry name" value="rpoC_TIGR"/>
    <property type="match status" value="1"/>
</dbReference>
<dbReference type="PANTHER" id="PTHR19376">
    <property type="entry name" value="DNA-DIRECTED RNA POLYMERASE"/>
    <property type="match status" value="1"/>
</dbReference>
<dbReference type="PANTHER" id="PTHR19376:SF54">
    <property type="entry name" value="DNA-DIRECTED RNA POLYMERASE SUBUNIT BETA"/>
    <property type="match status" value="1"/>
</dbReference>
<dbReference type="Pfam" id="PF04997">
    <property type="entry name" value="RNA_pol_Rpb1_1"/>
    <property type="match status" value="1"/>
</dbReference>
<dbReference type="Pfam" id="PF00623">
    <property type="entry name" value="RNA_pol_Rpb1_2"/>
    <property type="match status" value="2"/>
</dbReference>
<dbReference type="Pfam" id="PF04983">
    <property type="entry name" value="RNA_pol_Rpb1_3"/>
    <property type="match status" value="1"/>
</dbReference>
<dbReference type="Pfam" id="PF05000">
    <property type="entry name" value="RNA_pol_Rpb1_4"/>
    <property type="match status" value="1"/>
</dbReference>
<dbReference type="Pfam" id="PF04998">
    <property type="entry name" value="RNA_pol_Rpb1_5"/>
    <property type="match status" value="1"/>
</dbReference>
<dbReference type="SMART" id="SM00663">
    <property type="entry name" value="RPOLA_N"/>
    <property type="match status" value="1"/>
</dbReference>
<dbReference type="SUPFAM" id="SSF64484">
    <property type="entry name" value="beta and beta-prime subunits of DNA dependent RNA-polymerase"/>
    <property type="match status" value="1"/>
</dbReference>
<comment type="function">
    <text evidence="1">DNA-dependent RNA polymerase catalyzes the transcription of DNA into RNA using the four ribonucleoside triphosphates as substrates.</text>
</comment>
<comment type="catalytic activity">
    <reaction evidence="1">
        <text>RNA(n) + a ribonucleoside 5'-triphosphate = RNA(n+1) + diphosphate</text>
        <dbReference type="Rhea" id="RHEA:21248"/>
        <dbReference type="Rhea" id="RHEA-COMP:14527"/>
        <dbReference type="Rhea" id="RHEA-COMP:17342"/>
        <dbReference type="ChEBI" id="CHEBI:33019"/>
        <dbReference type="ChEBI" id="CHEBI:61557"/>
        <dbReference type="ChEBI" id="CHEBI:140395"/>
        <dbReference type="EC" id="2.7.7.6"/>
    </reaction>
</comment>
<comment type="cofactor">
    <cofactor evidence="1">
        <name>Mg(2+)</name>
        <dbReference type="ChEBI" id="CHEBI:18420"/>
    </cofactor>
    <text evidence="1">Binds 1 Mg(2+) ion per subunit.</text>
</comment>
<comment type="cofactor">
    <cofactor evidence="1">
        <name>Zn(2+)</name>
        <dbReference type="ChEBI" id="CHEBI:29105"/>
    </cofactor>
    <text evidence="1">Binds 2 Zn(2+) ions per subunit.</text>
</comment>
<comment type="subunit">
    <text evidence="1">The RNAP catalytic core consists of 2 alpha, 1 beta, 1 beta' and 1 omega subunit. When a sigma factor is associated with the core the holoenzyme is formed, which can initiate transcription.</text>
</comment>
<comment type="similarity">
    <text evidence="1">Belongs to the RNA polymerase beta' chain family.</text>
</comment>
<comment type="sequence caution" evidence="2">
    <conflict type="erroneous initiation">
        <sequence resource="EMBL-CDS" id="ABP89092"/>
    </conflict>
    <text>Extended N-terminus.</text>
</comment>
<organism>
    <name type="scientific">Streptococcus suis (strain 05ZYH33)</name>
    <dbReference type="NCBI Taxonomy" id="391295"/>
    <lineage>
        <taxon>Bacteria</taxon>
        <taxon>Bacillati</taxon>
        <taxon>Bacillota</taxon>
        <taxon>Bacilli</taxon>
        <taxon>Lactobacillales</taxon>
        <taxon>Streptococcaceae</taxon>
        <taxon>Streptococcus</taxon>
    </lineage>
</organism>
<sequence>MVDVNRFKSMQITLASPSKVRSWSYGEVKKPETINYRTLKPERDGLFDEVIFGPTKDWECSCGKYKRIRYKGITCDRCGVEVTRAKVRRERMGHIELKAPISHIWYFKGIPSRMGLTLDMSPRALEEVIYFAAYVVIDPKDTPLEHKSIMTEREYRERLREYGYGSFVAKMGAEAIQDLLKQVDLPKEIAALKEELKTASGQKRIKAVRRLDVLDAFYKSGNKPEWMILNILPVIPPDLRPMVQLDGGRFAASDLNELYRRVINRNNRLARLLELNAPGIIVQNEKRMLQEAVDALIDNGRRGRPITGPGSRPLKSLSHMLKGKQGRFRQNLLGKRVDFSGRSVIAVGPTLKMYQCGVPREMAIELFKPFVMREIVARDIAGNVKAAKRLIERGDDRIWDILEEVIKEHPVLLNRAPTLHRLGIQAFEPVLIDGKALRLHPLVCEAYNADFDGDQMAIHVPLSEEAQAEARILMLAAEHILNPKDGKPVVTPSQDMVLGNYYLTMEDAGREGEGMVFKDADEAVMAYRNGYVHLHTRVGIATDSLDKPWKDNQKHKVMMTTVGKILFNAIMPEGLPYLQEPNNANLTEGTPDKYFLEPGSDIKAAIAELPINPPFKKKNLGNIIAEIFKRFRTTETSALLDRLKDLGYYHSTLAGLTVGIADIPVIDNKAEIIEESHERVEQIKKQFRRGMITDDERYAAVTDEWRSAKEKLEKRLVEKQDPKNPIVMMMDSGARGNISNFSQLAGMRGLMSAPNGRIMELPILSNFREGLSVLEMFFSTHGARKGMTDTALKTADSGYLTRRLVDVAQDVIIREDDCGTDRGLDIRSITDGKEMIEPLEERLQGRYTKKTVKHPETGAVIIGPNQLITEDIAREIVNAGVEQVTIRSVFTCNTRHGVCRHCYGINLATGDAVEVGEAVGTIAAQSIGEPGTQLTMRTFHTGGVASNSDITQGLPRVQEIFEARNPKGEAVITEVKGEVIAIEEDASTRTKKVFVKGKTGEGEYVVPFTARMKVEVGDQVARGAALTEGSIQPKRLLEVRDVLAVETYLLSEVQKVYRSQGVEIGDKHIEVMVRQMLRKVRVMDPGDTDLLMGTLMDITDFTDANAEVVIAGGIPATARPVLMGITKASLETNSFLSAASFQETTRVLTDAAIRGKRDNLLGLKENVIIGKIIPAGTGMARYRNLEPQAINEVEIIEDTVAEELAAEAELEAVTE</sequence>
<reference key="1">
    <citation type="journal article" date="2007" name="PLoS ONE">
        <title>A glimpse of streptococcal toxic shock syndrome from comparative genomics of S. suis 2 Chinese isolates.</title>
        <authorList>
            <person name="Chen C."/>
            <person name="Tang J."/>
            <person name="Dong W."/>
            <person name="Wang C."/>
            <person name="Feng Y."/>
            <person name="Wang J."/>
            <person name="Zheng F."/>
            <person name="Pan X."/>
            <person name="Liu D."/>
            <person name="Li M."/>
            <person name="Song Y."/>
            <person name="Zhu X."/>
            <person name="Sun H."/>
            <person name="Feng T."/>
            <person name="Guo Z."/>
            <person name="Ju A."/>
            <person name="Ge J."/>
            <person name="Dong Y."/>
            <person name="Sun W."/>
            <person name="Jiang Y."/>
            <person name="Wang J."/>
            <person name="Yan J."/>
            <person name="Yang H."/>
            <person name="Wang X."/>
            <person name="Gao G.F."/>
            <person name="Yang R."/>
            <person name="Wang J."/>
            <person name="Yu J."/>
        </authorList>
    </citation>
    <scope>NUCLEOTIDE SEQUENCE [LARGE SCALE GENOMIC DNA]</scope>
    <source>
        <strain>05ZYH33</strain>
    </source>
</reference>
<feature type="chain" id="PRO_0000308890" description="DNA-directed RNA polymerase subunit beta'">
    <location>
        <begin position="1"/>
        <end position="1215"/>
    </location>
</feature>
<feature type="binding site" evidence="1">
    <location>
        <position position="60"/>
    </location>
    <ligand>
        <name>Zn(2+)</name>
        <dbReference type="ChEBI" id="CHEBI:29105"/>
        <label>1</label>
    </ligand>
</feature>
<feature type="binding site" evidence="1">
    <location>
        <position position="62"/>
    </location>
    <ligand>
        <name>Zn(2+)</name>
        <dbReference type="ChEBI" id="CHEBI:29105"/>
        <label>1</label>
    </ligand>
</feature>
<feature type="binding site" evidence="1">
    <location>
        <position position="75"/>
    </location>
    <ligand>
        <name>Zn(2+)</name>
        <dbReference type="ChEBI" id="CHEBI:29105"/>
        <label>1</label>
    </ligand>
</feature>
<feature type="binding site" evidence="1">
    <location>
        <position position="78"/>
    </location>
    <ligand>
        <name>Zn(2+)</name>
        <dbReference type="ChEBI" id="CHEBI:29105"/>
        <label>1</label>
    </ligand>
</feature>
<feature type="binding site" evidence="1">
    <location>
        <position position="450"/>
    </location>
    <ligand>
        <name>Mg(2+)</name>
        <dbReference type="ChEBI" id="CHEBI:18420"/>
    </ligand>
</feature>
<feature type="binding site" evidence="1">
    <location>
        <position position="452"/>
    </location>
    <ligand>
        <name>Mg(2+)</name>
        <dbReference type="ChEBI" id="CHEBI:18420"/>
    </ligand>
</feature>
<feature type="binding site" evidence="1">
    <location>
        <position position="454"/>
    </location>
    <ligand>
        <name>Mg(2+)</name>
        <dbReference type="ChEBI" id="CHEBI:18420"/>
    </ligand>
</feature>
<feature type="binding site" evidence="1">
    <location>
        <position position="818"/>
    </location>
    <ligand>
        <name>Zn(2+)</name>
        <dbReference type="ChEBI" id="CHEBI:29105"/>
        <label>2</label>
    </ligand>
</feature>
<feature type="binding site" evidence="1">
    <location>
        <position position="892"/>
    </location>
    <ligand>
        <name>Zn(2+)</name>
        <dbReference type="ChEBI" id="CHEBI:29105"/>
        <label>2</label>
    </ligand>
</feature>
<feature type="binding site" evidence="1">
    <location>
        <position position="899"/>
    </location>
    <ligand>
        <name>Zn(2+)</name>
        <dbReference type="ChEBI" id="CHEBI:29105"/>
        <label>2</label>
    </ligand>
</feature>
<feature type="binding site" evidence="1">
    <location>
        <position position="902"/>
    </location>
    <ligand>
        <name>Zn(2+)</name>
        <dbReference type="ChEBI" id="CHEBI:29105"/>
        <label>2</label>
    </ligand>
</feature>
<gene>
    <name evidence="1" type="primary">rpoC</name>
    <name type="ordered locus">SSU05_0122</name>
</gene>
<accession>A4VSK3</accession>
<name>RPOC_STRSY</name>